<evidence type="ECO:0000255" key="1">
    <source>
        <dbReference type="HAMAP-Rule" id="MF_01006"/>
    </source>
</evidence>
<organism>
    <name type="scientific">Synechocystis sp. (strain ATCC 27184 / PCC 6803 / Kazusa)</name>
    <dbReference type="NCBI Taxonomy" id="1111708"/>
    <lineage>
        <taxon>Bacteria</taxon>
        <taxon>Bacillati</taxon>
        <taxon>Cyanobacteriota</taxon>
        <taxon>Cyanophyceae</taxon>
        <taxon>Synechococcales</taxon>
        <taxon>Merismopediaceae</taxon>
        <taxon>Synechocystis</taxon>
    </lineage>
</organism>
<keyword id="KW-0046">Antibiotic resistance</keyword>
<keyword id="KW-0997">Cell inner membrane</keyword>
<keyword id="KW-1003">Cell membrane</keyword>
<keyword id="KW-0133">Cell shape</keyword>
<keyword id="KW-0961">Cell wall biogenesis/degradation</keyword>
<keyword id="KW-0378">Hydrolase</keyword>
<keyword id="KW-0472">Membrane</keyword>
<keyword id="KW-0573">Peptidoglycan synthesis</keyword>
<keyword id="KW-1185">Reference proteome</keyword>
<keyword id="KW-0812">Transmembrane</keyword>
<keyword id="KW-1133">Transmembrane helix</keyword>
<feature type="chain" id="PRO_0000151226" description="Undecaprenyl-diphosphatase">
    <location>
        <begin position="1"/>
        <end position="326"/>
    </location>
</feature>
<feature type="transmembrane region" description="Helical" evidence="1">
    <location>
        <begin position="11"/>
        <end position="31"/>
    </location>
</feature>
<feature type="transmembrane region" description="Helical" evidence="1">
    <location>
        <begin position="42"/>
        <end position="62"/>
    </location>
</feature>
<feature type="transmembrane region" description="Helical" evidence="1">
    <location>
        <begin position="90"/>
        <end position="110"/>
    </location>
</feature>
<feature type="transmembrane region" description="Helical" evidence="1">
    <location>
        <begin position="138"/>
        <end position="158"/>
    </location>
</feature>
<feature type="transmembrane region" description="Helical" evidence="1">
    <location>
        <begin position="165"/>
        <end position="185"/>
    </location>
</feature>
<feature type="transmembrane region" description="Helical" evidence="1">
    <location>
        <begin position="212"/>
        <end position="232"/>
    </location>
</feature>
<feature type="transmembrane region" description="Helical" evidence="1">
    <location>
        <begin position="242"/>
        <end position="262"/>
    </location>
</feature>
<feature type="transmembrane region" description="Helical" evidence="1">
    <location>
        <begin position="272"/>
        <end position="292"/>
    </location>
</feature>
<feature type="transmembrane region" description="Helical" evidence="1">
    <location>
        <begin position="304"/>
        <end position="324"/>
    </location>
</feature>
<reference key="1">
    <citation type="journal article" date="1995" name="DNA Res.">
        <title>Sequence analysis of the genome of the unicellular cyanobacterium Synechocystis sp. strain PCC6803. I. Sequence features in the 1 Mb region from map positions 64% to 92% of the genome.</title>
        <authorList>
            <person name="Kaneko T."/>
            <person name="Tanaka A."/>
            <person name="Sato S."/>
            <person name="Kotani H."/>
            <person name="Sazuka T."/>
            <person name="Miyajima N."/>
            <person name="Sugiura M."/>
            <person name="Tabata S."/>
        </authorList>
    </citation>
    <scope>NUCLEOTIDE SEQUENCE [LARGE SCALE GENOMIC DNA]</scope>
    <source>
        <strain>ATCC 27184 / PCC 6803 / N-1</strain>
    </source>
</reference>
<reference key="2">
    <citation type="journal article" date="1996" name="DNA Res.">
        <title>Sequence analysis of the genome of the unicellular cyanobacterium Synechocystis sp. strain PCC6803. II. Sequence determination of the entire genome and assignment of potential protein-coding regions.</title>
        <authorList>
            <person name="Kaneko T."/>
            <person name="Sato S."/>
            <person name="Kotani H."/>
            <person name="Tanaka A."/>
            <person name="Asamizu E."/>
            <person name="Nakamura Y."/>
            <person name="Miyajima N."/>
            <person name="Hirosawa M."/>
            <person name="Sugiura M."/>
            <person name="Sasamoto S."/>
            <person name="Kimura T."/>
            <person name="Hosouchi T."/>
            <person name="Matsuno A."/>
            <person name="Muraki A."/>
            <person name="Nakazaki N."/>
            <person name="Naruo K."/>
            <person name="Okumura S."/>
            <person name="Shimpo S."/>
            <person name="Takeuchi C."/>
            <person name="Wada T."/>
            <person name="Watanabe A."/>
            <person name="Yamada M."/>
            <person name="Yasuda M."/>
            <person name="Tabata S."/>
        </authorList>
    </citation>
    <scope>NUCLEOTIDE SEQUENCE [LARGE SCALE GENOMIC DNA]</scope>
    <source>
        <strain>ATCC 27184 / PCC 6803 / Kazusa</strain>
    </source>
</reference>
<protein>
    <recommendedName>
        <fullName evidence="1">Undecaprenyl-diphosphatase</fullName>
        <ecNumber evidence="1">3.6.1.27</ecNumber>
    </recommendedName>
    <alternativeName>
        <fullName evidence="1">Bacitracin resistance protein</fullName>
    </alternativeName>
    <alternativeName>
        <fullName evidence="1">Undecaprenyl pyrophosphate phosphatase</fullName>
    </alternativeName>
</protein>
<name>UPPP_SYNY3</name>
<gene>
    <name evidence="1" type="primary">uppP</name>
    <name type="synonym">bacA</name>
    <name type="synonym">upk</name>
    <name type="ordered locus">sll0210</name>
</gene>
<comment type="function">
    <text evidence="1">Catalyzes the dephosphorylation of undecaprenyl diphosphate (UPP). Confers resistance to bacitracin.</text>
</comment>
<comment type="catalytic activity">
    <reaction evidence="1">
        <text>di-trans,octa-cis-undecaprenyl diphosphate + H2O = di-trans,octa-cis-undecaprenyl phosphate + phosphate + H(+)</text>
        <dbReference type="Rhea" id="RHEA:28094"/>
        <dbReference type="ChEBI" id="CHEBI:15377"/>
        <dbReference type="ChEBI" id="CHEBI:15378"/>
        <dbReference type="ChEBI" id="CHEBI:43474"/>
        <dbReference type="ChEBI" id="CHEBI:58405"/>
        <dbReference type="ChEBI" id="CHEBI:60392"/>
        <dbReference type="EC" id="3.6.1.27"/>
    </reaction>
</comment>
<comment type="subcellular location">
    <subcellularLocation>
        <location evidence="1">Cell inner membrane</location>
        <topology evidence="1">Multi-pass membrane protein</topology>
    </subcellularLocation>
</comment>
<comment type="miscellaneous">
    <text>Bacitracin is thought to be involved in the inhibition of peptidoglycan synthesis by sequestering undecaprenyl diphosphate, thereby reducing the pool of lipid carrier available.</text>
</comment>
<comment type="similarity">
    <text evidence="1">Belongs to the UppP family.</text>
</comment>
<sequence length="326" mass="35077">MSPRQLNFLSAFSLSVAIAVVYHQAWGIAVAQPILPSEAVETGVISNGISINLFQAFVLGFIQGATEFLPISSTAHLKAVPMALGWGDPGVAFTAVIQLGSIGAVFWYFWEDLTGIAKGIIKAVQTRQYDSLEFKLGLGIGLGTIPIVFFGLLMKLLVQDLDNSFFRSLSTIAIASIVMALLLALAEKLGTHRRPFEKLRWQDGLIMGTAQALALIPGVSRSGSTLTAGLFINLERAAAARFSFLLGIPAITIAGLVELKGLLDKNLSNDAILPLIVGTISSAVFSYLAIAWLIKFLQKRSTWIFVWYRLIFGVVILTALGMGFGT</sequence>
<accession>Q55684</accession>
<proteinExistence type="inferred from homology"/>
<dbReference type="EC" id="3.6.1.27" evidence="1"/>
<dbReference type="EMBL" id="BA000022">
    <property type="protein sequence ID" value="BAA10212.1"/>
    <property type="molecule type" value="Genomic_DNA"/>
</dbReference>
<dbReference type="PIR" id="S76360">
    <property type="entry name" value="S76360"/>
</dbReference>
<dbReference type="SMR" id="Q55684"/>
<dbReference type="FunCoup" id="Q55684">
    <property type="interactions" value="315"/>
</dbReference>
<dbReference type="IntAct" id="Q55684">
    <property type="interactions" value="2"/>
</dbReference>
<dbReference type="STRING" id="1148.gene:10499711"/>
<dbReference type="PaxDb" id="1148-1001585"/>
<dbReference type="EnsemblBacteria" id="BAA10212">
    <property type="protein sequence ID" value="BAA10212"/>
    <property type="gene ID" value="BAA10212"/>
</dbReference>
<dbReference type="KEGG" id="syn:sll0210"/>
<dbReference type="eggNOG" id="COG1968">
    <property type="taxonomic scope" value="Bacteria"/>
</dbReference>
<dbReference type="InParanoid" id="Q55684"/>
<dbReference type="PhylomeDB" id="Q55684"/>
<dbReference type="Proteomes" id="UP000001425">
    <property type="component" value="Chromosome"/>
</dbReference>
<dbReference type="GO" id="GO:0005886">
    <property type="term" value="C:plasma membrane"/>
    <property type="evidence" value="ECO:0000318"/>
    <property type="project" value="GO_Central"/>
</dbReference>
<dbReference type="GO" id="GO:0050380">
    <property type="term" value="F:undecaprenyl-diphosphatase activity"/>
    <property type="evidence" value="ECO:0000318"/>
    <property type="project" value="GO_Central"/>
</dbReference>
<dbReference type="GO" id="GO:0071555">
    <property type="term" value="P:cell wall organization"/>
    <property type="evidence" value="ECO:0007669"/>
    <property type="project" value="UniProtKB-KW"/>
</dbReference>
<dbReference type="GO" id="GO:0009252">
    <property type="term" value="P:peptidoglycan biosynthetic process"/>
    <property type="evidence" value="ECO:0007669"/>
    <property type="project" value="UniProtKB-KW"/>
</dbReference>
<dbReference type="GO" id="GO:0000270">
    <property type="term" value="P:peptidoglycan metabolic process"/>
    <property type="evidence" value="ECO:0000318"/>
    <property type="project" value="GO_Central"/>
</dbReference>
<dbReference type="GO" id="GO:0008360">
    <property type="term" value="P:regulation of cell shape"/>
    <property type="evidence" value="ECO:0007669"/>
    <property type="project" value="UniProtKB-KW"/>
</dbReference>
<dbReference type="GO" id="GO:0046677">
    <property type="term" value="P:response to antibiotic"/>
    <property type="evidence" value="ECO:0007669"/>
    <property type="project" value="UniProtKB-UniRule"/>
</dbReference>
<dbReference type="HAMAP" id="MF_01006">
    <property type="entry name" value="Undec_diphosphatase"/>
    <property type="match status" value="1"/>
</dbReference>
<dbReference type="InterPro" id="IPR003824">
    <property type="entry name" value="UppP"/>
</dbReference>
<dbReference type="NCBIfam" id="NF001394">
    <property type="entry name" value="PRK00281.2-5"/>
    <property type="match status" value="1"/>
</dbReference>
<dbReference type="NCBIfam" id="TIGR00753">
    <property type="entry name" value="undec_PP_bacA"/>
    <property type="match status" value="1"/>
</dbReference>
<dbReference type="PANTHER" id="PTHR30622">
    <property type="entry name" value="UNDECAPRENYL-DIPHOSPHATASE"/>
    <property type="match status" value="1"/>
</dbReference>
<dbReference type="PANTHER" id="PTHR30622:SF4">
    <property type="entry name" value="UNDECAPRENYL-DIPHOSPHATASE"/>
    <property type="match status" value="1"/>
</dbReference>
<dbReference type="Pfam" id="PF02673">
    <property type="entry name" value="BacA"/>
    <property type="match status" value="1"/>
</dbReference>